<keyword id="KW-1015">Disulfide bond</keyword>
<keyword id="KW-1185">Reference proteome</keyword>
<keyword id="KW-0964">Secreted</keyword>
<keyword id="KW-0732">Signal</keyword>
<organism>
    <name type="scientific">Equus caballus</name>
    <name type="common">Horse</name>
    <dbReference type="NCBI Taxonomy" id="9796"/>
    <lineage>
        <taxon>Eukaryota</taxon>
        <taxon>Metazoa</taxon>
        <taxon>Chordata</taxon>
        <taxon>Craniata</taxon>
        <taxon>Vertebrata</taxon>
        <taxon>Euteleostomi</taxon>
        <taxon>Mammalia</taxon>
        <taxon>Eutheria</taxon>
        <taxon>Laurasiatheria</taxon>
        <taxon>Perissodactyla</taxon>
        <taxon>Equidae</taxon>
        <taxon>Equus</taxon>
    </lineage>
</organism>
<reference key="1">
    <citation type="journal article" date="1998" name="Biochim. Biophys. Acta">
        <title>Equine CRISP-3: primary structure and expression in the male genital tract.</title>
        <authorList>
            <person name="Schambony A."/>
            <person name="Gentzel M."/>
            <person name="Wolfes H."/>
            <person name="Raida M."/>
            <person name="Neumann U."/>
            <person name="Toepfer-Petersen E."/>
        </authorList>
    </citation>
    <scope>NUCLEOTIDE SEQUENCE [MRNA]</scope>
    <scope>TISSUE SPECIFICITY</scope>
    <source>
        <tissue>Ampulla</tissue>
    </source>
</reference>
<reference key="2">
    <citation type="journal article" date="2002" name="Gene">
        <title>Molecular characterization of the equine testis-specific protein 1 (TPX1) and acidic epididymal glycoprotein 2 (AEG2) genes encoding members of the cysteine-rich secretory protein (CRISP) family.</title>
        <authorList>
            <person name="Giese A."/>
            <person name="Jude R."/>
            <person name="Kuiper H."/>
            <person name="Raudsepp T."/>
            <person name="Piumi F."/>
            <person name="Schambony A."/>
            <person name="Guerin G."/>
            <person name="Chowdhary B.P."/>
            <person name="Distl O."/>
            <person name="Topfer-Petersen E."/>
            <person name="Leeb T."/>
        </authorList>
    </citation>
    <scope>NUCLEOTIDE SEQUENCE [GENOMIC DNA / MRNA]</scope>
    <scope>TISSUE SPECIFICITY</scope>
    <source>
        <tissue>Submandibular gland</tissue>
    </source>
</reference>
<reference key="3">
    <citation type="journal article" date="2010" name="Biochim. Biophys. Acta">
        <title>Human CRISP-3 binds serum alpha1B-glycoprotein across species.</title>
        <authorList>
            <person name="Udby L."/>
            <person name="Johnsen A.H."/>
            <person name="Borregaard N."/>
        </authorList>
    </citation>
    <scope>INTERACTION WITH A1BG</scope>
</reference>
<evidence type="ECO:0000250" key="1"/>
<evidence type="ECO:0000255" key="2"/>
<evidence type="ECO:0000255" key="3">
    <source>
        <dbReference type="PROSITE-ProRule" id="PRU01005"/>
    </source>
</evidence>
<evidence type="ECO:0000269" key="4">
    <source>
    </source>
</evidence>
<evidence type="ECO:0000269" key="5">
    <source>
    </source>
</evidence>
<evidence type="ECO:0000269" key="6">
    <source>
    </source>
</evidence>
<evidence type="ECO:0000305" key="7"/>
<feature type="signal peptide" evidence="2">
    <location>
        <begin position="1"/>
        <end position="22"/>
    </location>
</feature>
<feature type="chain" id="PRO_0000006267" description="Cysteine-rich secretory protein 3">
    <location>
        <begin position="23"/>
        <end position="245"/>
    </location>
</feature>
<feature type="domain" description="SCP">
    <location>
        <begin position="42"/>
        <end position="171"/>
    </location>
</feature>
<feature type="domain" description="ShKT" evidence="3">
    <location>
        <begin position="207"/>
        <end position="240"/>
    </location>
</feature>
<feature type="disulfide bond" evidence="3">
    <location>
        <begin position="191"/>
        <end position="198"/>
    </location>
</feature>
<feature type="disulfide bond" evidence="3">
    <location>
        <begin position="194"/>
        <end position="203"/>
    </location>
</feature>
<feature type="disulfide bond" evidence="3">
    <location>
        <begin position="207"/>
        <end position="240"/>
    </location>
</feature>
<feature type="disulfide bond" evidence="3">
    <location>
        <begin position="216"/>
        <end position="234"/>
    </location>
</feature>
<feature type="disulfide bond" evidence="3">
    <location>
        <begin position="225"/>
        <end position="238"/>
    </location>
</feature>
<feature type="sequence conflict" description="In Ref. 2; CAD31227/CAD31228." evidence="7" ref="2">
    <original>T</original>
    <variation>A</variation>
    <location>
        <position position="236"/>
    </location>
</feature>
<name>CRIS3_HORSE</name>
<sequence>MALLPVLLFLAAVLLPFFPASGQDPGFAALSITKSEVQKEIVNKHNDLRRTVSPLASNMLKMQWDSKTATNAQNWANKCLLQHSKAEDRAVGTMKCGENLFMSSIPNSWSDAIQNWHDEVHDFKYGVGPKTPNAVVGHYTQVVWYSSYRVGCGIAYCPKQGTLKYYYVCQYCPAGNYVNKINTPYEQGTPCARCPGNCDNGLCTNSCEYEDLVSNCDSLKKIAGCEHELLKENCKTTCQCENKIY</sequence>
<protein>
    <recommendedName>
        <fullName>Cysteine-rich secretory protein 3</fullName>
        <shortName>CRISP-3</shortName>
    </recommendedName>
    <alternativeName>
        <fullName>Acidic epididymal glycoprotein 2</fullName>
        <shortName>AEG2</shortName>
    </alternativeName>
</protein>
<accession>O19010</accession>
<accession>Q8HXA1</accession>
<gene>
    <name type="primary">CRISP3</name>
</gene>
<proteinExistence type="evidence at protein level"/>
<comment type="subunit">
    <text evidence="5">Interacts with A1BG.</text>
</comment>
<comment type="subcellular location">
    <subcellularLocation>
        <location evidence="1">Secreted</location>
    </subcellularLocation>
    <text evidence="1">In neutrophils, localized in specific granules.</text>
</comment>
<comment type="tissue specificity">
    <text evidence="4 6">Expressed in the salivary gland, in the ampulla and the seminal vesicle.</text>
</comment>
<comment type="similarity">
    <text evidence="7">Belongs to the CRISP family.</text>
</comment>
<dbReference type="EMBL" id="AJ001400">
    <property type="protein sequence ID" value="CAA04729.1"/>
    <property type="molecule type" value="mRNA"/>
</dbReference>
<dbReference type="EMBL" id="AJ459964">
    <property type="protein sequence ID" value="CAD31227.1"/>
    <property type="molecule type" value="mRNA"/>
</dbReference>
<dbReference type="EMBL" id="AJ459965">
    <property type="protein sequence ID" value="CAD31228.1"/>
    <property type="molecule type" value="Genomic_DNA"/>
</dbReference>
<dbReference type="RefSeq" id="NP_001075343.1">
    <property type="nucleotide sequence ID" value="NM_001081874.1"/>
</dbReference>
<dbReference type="SMR" id="O19010"/>
<dbReference type="FunCoup" id="O19010">
    <property type="interactions" value="1"/>
</dbReference>
<dbReference type="STRING" id="9796.ENSECAP00000054102"/>
<dbReference type="PaxDb" id="9796-ENSECAP00000054102"/>
<dbReference type="GeneID" id="100033965"/>
<dbReference type="KEGG" id="ecb:100033965"/>
<dbReference type="CTD" id="10321"/>
<dbReference type="InParanoid" id="O19010"/>
<dbReference type="OrthoDB" id="737510at2759"/>
<dbReference type="Proteomes" id="UP000002281">
    <property type="component" value="Unplaced"/>
</dbReference>
<dbReference type="GO" id="GO:0005576">
    <property type="term" value="C:extracellular region"/>
    <property type="evidence" value="ECO:0000250"/>
    <property type="project" value="UniProtKB"/>
</dbReference>
<dbReference type="GO" id="GO:0005615">
    <property type="term" value="C:extracellular space"/>
    <property type="evidence" value="ECO:0000318"/>
    <property type="project" value="GO_Central"/>
</dbReference>
<dbReference type="GO" id="GO:0042581">
    <property type="term" value="C:specific granule"/>
    <property type="evidence" value="ECO:0000250"/>
    <property type="project" value="UniProtKB"/>
</dbReference>
<dbReference type="GO" id="GO:0098609">
    <property type="term" value="P:cell-cell adhesion"/>
    <property type="evidence" value="ECO:0000303"/>
    <property type="project" value="UniProtKB"/>
</dbReference>
<dbReference type="GO" id="GO:0009566">
    <property type="term" value="P:fertilization"/>
    <property type="evidence" value="ECO:0000303"/>
    <property type="project" value="UniProtKB"/>
</dbReference>
<dbReference type="GO" id="GO:0019953">
    <property type="term" value="P:sexual reproduction"/>
    <property type="evidence" value="ECO:0000318"/>
    <property type="project" value="GO_Central"/>
</dbReference>
<dbReference type="GO" id="GO:0007283">
    <property type="term" value="P:spermatogenesis"/>
    <property type="evidence" value="ECO:0000303"/>
    <property type="project" value="UniProtKB"/>
</dbReference>
<dbReference type="CDD" id="cd05383">
    <property type="entry name" value="CAP_CRISP"/>
    <property type="match status" value="1"/>
</dbReference>
<dbReference type="FunFam" id="1.10.10.740:FF:000001">
    <property type="entry name" value="Cysteine-rich secretory protein 2"/>
    <property type="match status" value="1"/>
</dbReference>
<dbReference type="FunFam" id="3.40.33.10:FF:000005">
    <property type="entry name" value="Cysteine-rich secretory protein 2"/>
    <property type="match status" value="1"/>
</dbReference>
<dbReference type="Gene3D" id="3.40.33.10">
    <property type="entry name" value="CAP"/>
    <property type="match status" value="1"/>
</dbReference>
<dbReference type="Gene3D" id="1.10.10.740">
    <property type="entry name" value="Crisp domain"/>
    <property type="match status" value="1"/>
</dbReference>
<dbReference type="InterPro" id="IPR018244">
    <property type="entry name" value="Allrgn_V5/Tpx1_CS"/>
</dbReference>
<dbReference type="InterPro" id="IPR014044">
    <property type="entry name" value="CAP_dom"/>
</dbReference>
<dbReference type="InterPro" id="IPR035940">
    <property type="entry name" value="CAP_sf"/>
</dbReference>
<dbReference type="InterPro" id="IPR042076">
    <property type="entry name" value="Crisp-like_dom"/>
</dbReference>
<dbReference type="InterPro" id="IPR001283">
    <property type="entry name" value="CRISP-related"/>
</dbReference>
<dbReference type="InterPro" id="IPR013871">
    <property type="entry name" value="Cysteine_rich_secretory"/>
</dbReference>
<dbReference type="InterPro" id="IPR034117">
    <property type="entry name" value="SCP_CRISP"/>
</dbReference>
<dbReference type="InterPro" id="IPR003582">
    <property type="entry name" value="ShKT_dom"/>
</dbReference>
<dbReference type="PANTHER" id="PTHR10334">
    <property type="entry name" value="CYSTEINE-RICH SECRETORY PROTEIN-RELATED"/>
    <property type="match status" value="1"/>
</dbReference>
<dbReference type="Pfam" id="PF00188">
    <property type="entry name" value="CAP"/>
    <property type="match status" value="1"/>
</dbReference>
<dbReference type="Pfam" id="PF08562">
    <property type="entry name" value="Crisp"/>
    <property type="match status" value="1"/>
</dbReference>
<dbReference type="PRINTS" id="PR00837">
    <property type="entry name" value="V5TPXLIKE"/>
</dbReference>
<dbReference type="SMART" id="SM00198">
    <property type="entry name" value="SCP"/>
    <property type="match status" value="1"/>
</dbReference>
<dbReference type="SUPFAM" id="SSF57546">
    <property type="entry name" value="Crisp domain-like"/>
    <property type="match status" value="1"/>
</dbReference>
<dbReference type="SUPFAM" id="SSF55797">
    <property type="entry name" value="PR-1-like"/>
    <property type="match status" value="1"/>
</dbReference>
<dbReference type="PROSITE" id="PS01009">
    <property type="entry name" value="CRISP_1"/>
    <property type="match status" value="1"/>
</dbReference>
<dbReference type="PROSITE" id="PS01010">
    <property type="entry name" value="CRISP_2"/>
    <property type="match status" value="1"/>
</dbReference>
<dbReference type="PROSITE" id="PS51670">
    <property type="entry name" value="SHKT"/>
    <property type="match status" value="1"/>
</dbReference>